<reference key="1">
    <citation type="journal article" date="1995" name="Planta">
        <title>Cell-type specific, coordinate expression of two ADP-glucose pyrophosphorylase genes in relation to starch biosynthesis during seed development of Vicia faba L.</title>
        <authorList>
            <person name="Weber H."/>
            <person name="Heim U."/>
            <person name="Borisjuk L."/>
            <person name="Wobus U."/>
        </authorList>
    </citation>
    <scope>NUCLEOTIDE SEQUENCE [MRNA]</scope>
    <source>
        <strain>cv. Fribo</strain>
        <tissue>Cotyledon</tissue>
    </source>
</reference>
<evidence type="ECO:0000250" key="1"/>
<evidence type="ECO:0000255" key="2"/>
<evidence type="ECO:0000256" key="3">
    <source>
        <dbReference type="SAM" id="MobiDB-lite"/>
    </source>
</evidence>
<evidence type="ECO:0000305" key="4"/>
<sequence length="508" mass="55627">MSSIVTSGVINVPRSSSSSKNLSFSSSSQLSGNKILTVSGNGAPRGRCTLKHVFLTPKAVSDSQNSQTCLDPDASRSVLGIILGGGAGTRLYPLTKKRAKPAVPLGANYRLIDIPVSNCLNSNISKIYVLTQFNSASLNRHLSRAYASNLGGYKNEGFVEVLAAQQSPENPNWFQGTADAVRQYLWLFEEHNVLEYLILAGDHLYRMDYEKFIQAHRESDADITVAALPMDEKRATAFGLMKIDEEGRIIEFAEKPKGEQLKAMKVDTTILGLDDERAKEMPFIASMGIYVISKNVMLDLLRDKFPGANDFGSEVIPGATSIGMRVQAYLYDGYWEDIGTIEAFYNANLGITKKPVPDFSFYDRSSPIYTQPRYLPPSKMLDADITDSVIGEGCVIKNCKIFHSVVGLRSCISEGAIIEDTLLMGADYYETEADKRFLAAKGSVPIGIGKNSHIKRAIVDKNARIGENVKIINSDNVQEAARETEGYFIKSGIVTIIKDALIPSGTVL</sequence>
<gene>
    <name type="primary">AGPC</name>
</gene>
<dbReference type="EC" id="2.7.7.27"/>
<dbReference type="EMBL" id="X76940">
    <property type="protein sequence ID" value="CAA54259.1"/>
    <property type="molecule type" value="mRNA"/>
</dbReference>
<dbReference type="PIR" id="S41293">
    <property type="entry name" value="S41293"/>
</dbReference>
<dbReference type="SMR" id="P52416"/>
<dbReference type="BRENDA" id="2.7.7.27">
    <property type="organism ID" value="986"/>
</dbReference>
<dbReference type="UniPathway" id="UPA00152"/>
<dbReference type="GO" id="GO:0009507">
    <property type="term" value="C:chloroplast"/>
    <property type="evidence" value="ECO:0007669"/>
    <property type="project" value="UniProtKB-SubCell"/>
</dbReference>
<dbReference type="GO" id="GO:0005524">
    <property type="term" value="F:ATP binding"/>
    <property type="evidence" value="ECO:0007669"/>
    <property type="project" value="UniProtKB-KW"/>
</dbReference>
<dbReference type="GO" id="GO:0008878">
    <property type="term" value="F:glucose-1-phosphate adenylyltransferase activity"/>
    <property type="evidence" value="ECO:0007669"/>
    <property type="project" value="UniProtKB-EC"/>
</dbReference>
<dbReference type="GO" id="GO:0005978">
    <property type="term" value="P:glycogen biosynthetic process"/>
    <property type="evidence" value="ECO:0007669"/>
    <property type="project" value="InterPro"/>
</dbReference>
<dbReference type="GO" id="GO:0019252">
    <property type="term" value="P:starch biosynthetic process"/>
    <property type="evidence" value="ECO:0007669"/>
    <property type="project" value="UniProtKB-UniPathway"/>
</dbReference>
<dbReference type="CDD" id="cd02508">
    <property type="entry name" value="ADP_Glucose_PP"/>
    <property type="match status" value="1"/>
</dbReference>
<dbReference type="CDD" id="cd04651">
    <property type="entry name" value="LbH_G1P_AT_C"/>
    <property type="match status" value="1"/>
</dbReference>
<dbReference type="FunFam" id="2.160.10.10:FF:000010">
    <property type="entry name" value="Glucose-1-phosphate adenylyltransferase"/>
    <property type="match status" value="1"/>
</dbReference>
<dbReference type="FunFam" id="3.90.550.10:FF:000030">
    <property type="entry name" value="Glucose-1-phosphate adenylyltransferase"/>
    <property type="match status" value="1"/>
</dbReference>
<dbReference type="Gene3D" id="2.160.10.10">
    <property type="entry name" value="Hexapeptide repeat proteins"/>
    <property type="match status" value="1"/>
</dbReference>
<dbReference type="Gene3D" id="3.90.550.10">
    <property type="entry name" value="Spore Coat Polysaccharide Biosynthesis Protein SpsA, Chain A"/>
    <property type="match status" value="1"/>
</dbReference>
<dbReference type="InterPro" id="IPR011831">
    <property type="entry name" value="ADP-Glc_PPase"/>
</dbReference>
<dbReference type="InterPro" id="IPR005836">
    <property type="entry name" value="ADP_Glu_pyroP_CS"/>
</dbReference>
<dbReference type="InterPro" id="IPR005835">
    <property type="entry name" value="NTP_transferase_dom"/>
</dbReference>
<dbReference type="InterPro" id="IPR029044">
    <property type="entry name" value="Nucleotide-diphossugar_trans"/>
</dbReference>
<dbReference type="InterPro" id="IPR011004">
    <property type="entry name" value="Trimer_LpxA-like_sf"/>
</dbReference>
<dbReference type="NCBIfam" id="TIGR02091">
    <property type="entry name" value="glgC"/>
    <property type="match status" value="1"/>
</dbReference>
<dbReference type="NCBIfam" id="NF002772">
    <property type="entry name" value="PRK02862.1"/>
    <property type="match status" value="1"/>
</dbReference>
<dbReference type="PANTHER" id="PTHR43523:SF12">
    <property type="entry name" value="GLUCOSE-1-PHOSPHATE ADENYLYLTRANSFERASE LARGE SUBUNIT 1, CHLOROPLASTIC-RELATED"/>
    <property type="match status" value="1"/>
</dbReference>
<dbReference type="PANTHER" id="PTHR43523">
    <property type="entry name" value="GLUCOSE-1-PHOSPHATE ADENYLYLTRANSFERASE-RELATED"/>
    <property type="match status" value="1"/>
</dbReference>
<dbReference type="Pfam" id="PF25247">
    <property type="entry name" value="LbH_GLGC"/>
    <property type="match status" value="1"/>
</dbReference>
<dbReference type="Pfam" id="PF00483">
    <property type="entry name" value="NTP_transferase"/>
    <property type="match status" value="1"/>
</dbReference>
<dbReference type="SUPFAM" id="SSF53448">
    <property type="entry name" value="Nucleotide-diphospho-sugar transferases"/>
    <property type="match status" value="1"/>
</dbReference>
<dbReference type="SUPFAM" id="SSF51161">
    <property type="entry name" value="Trimeric LpxA-like enzymes"/>
    <property type="match status" value="1"/>
</dbReference>
<dbReference type="PROSITE" id="PS00808">
    <property type="entry name" value="ADP_GLC_PYROPHOSPH_1"/>
    <property type="match status" value="1"/>
</dbReference>
<dbReference type="PROSITE" id="PS00809">
    <property type="entry name" value="ADP_GLC_PYROPHOSPH_2"/>
    <property type="match status" value="1"/>
</dbReference>
<dbReference type="PROSITE" id="PS00810">
    <property type="entry name" value="ADP_GLC_PYROPHOSPH_3"/>
    <property type="match status" value="1"/>
</dbReference>
<comment type="function">
    <text>This protein plays a role in synthesis of starch. It catalyzes the synthesis of the activated glycosyl donor, ADP-glucose from Glc-1-P and ATP.</text>
</comment>
<comment type="catalytic activity">
    <reaction>
        <text>alpha-D-glucose 1-phosphate + ATP + H(+) = ADP-alpha-D-glucose + diphosphate</text>
        <dbReference type="Rhea" id="RHEA:12120"/>
        <dbReference type="ChEBI" id="CHEBI:15378"/>
        <dbReference type="ChEBI" id="CHEBI:30616"/>
        <dbReference type="ChEBI" id="CHEBI:33019"/>
        <dbReference type="ChEBI" id="CHEBI:57498"/>
        <dbReference type="ChEBI" id="CHEBI:58601"/>
        <dbReference type="EC" id="2.7.7.27"/>
    </reaction>
</comment>
<comment type="activity regulation">
    <text>Activated by 3'phosphoglycerate, inhibited by orthophosphate. Allosteric regulation.</text>
</comment>
<comment type="pathway">
    <text>Glycan biosynthesis; starch biosynthesis.</text>
</comment>
<comment type="subunit">
    <text>Heterotetramer.</text>
</comment>
<comment type="subcellular location">
    <subcellularLocation>
        <location evidence="1">Plastid</location>
        <location evidence="1">Chloroplast</location>
    </subcellularLocation>
</comment>
<comment type="tissue specificity">
    <text>Seeds.</text>
</comment>
<comment type="developmental stage">
    <text>It is present in young cotyledons at 14 days after fertilization (daf) when cells are still rapidly dividing. Levels steadily accumulate until 30 daf and with the beginning of the seeds desiccation phase at 50 daf the levels decrease to very low levels.</text>
</comment>
<comment type="similarity">
    <text evidence="4">Belongs to the bacterial/plant glucose-1-phosphate adenylyltransferase family.</text>
</comment>
<accession>P52416</accession>
<name>GLGS1_VICFA</name>
<protein>
    <recommendedName>
        <fullName>Glucose-1-phosphate adenylyltransferase small subunit 1, chloroplastic</fullName>
        <ecNumber>2.7.7.27</ecNumber>
    </recommendedName>
    <alternativeName>
        <fullName>ADP-glucose pyrophosphorylase</fullName>
    </alternativeName>
    <alternativeName>
        <fullName>ADP-glucose synthase</fullName>
    </alternativeName>
    <alternativeName>
        <fullName>AGPase B</fullName>
    </alternativeName>
    <alternativeName>
        <fullName>Alpha-D-glucose-1-phosphate adenyl transferase</fullName>
    </alternativeName>
</protein>
<keyword id="KW-0021">Allosteric enzyme</keyword>
<keyword id="KW-0067">ATP-binding</keyword>
<keyword id="KW-0150">Chloroplast</keyword>
<keyword id="KW-0547">Nucleotide-binding</keyword>
<keyword id="KW-0548">Nucleotidyltransferase</keyword>
<keyword id="KW-0934">Plastid</keyword>
<keyword id="KW-0750">Starch biosynthesis</keyword>
<keyword id="KW-0808">Transferase</keyword>
<keyword id="KW-0809">Transit peptide</keyword>
<feature type="transit peptide" description="Chloroplast" evidence="2">
    <location>
        <begin position="1"/>
        <end position="59"/>
    </location>
</feature>
<feature type="chain" id="PRO_0000011156" description="Glucose-1-phosphate adenylyltransferase small subunit 1, chloroplastic">
    <location>
        <begin position="60"/>
        <end position="508"/>
    </location>
</feature>
<feature type="region of interest" description="Disordered" evidence="3">
    <location>
        <begin position="1"/>
        <end position="27"/>
    </location>
</feature>
<feature type="compositionally biased region" description="Low complexity" evidence="3">
    <location>
        <begin position="15"/>
        <end position="27"/>
    </location>
</feature>
<proteinExistence type="evidence at transcript level"/>
<organism>
    <name type="scientific">Vicia faba</name>
    <name type="common">Broad bean</name>
    <name type="synonym">Faba vulgaris</name>
    <dbReference type="NCBI Taxonomy" id="3906"/>
    <lineage>
        <taxon>Eukaryota</taxon>
        <taxon>Viridiplantae</taxon>
        <taxon>Streptophyta</taxon>
        <taxon>Embryophyta</taxon>
        <taxon>Tracheophyta</taxon>
        <taxon>Spermatophyta</taxon>
        <taxon>Magnoliopsida</taxon>
        <taxon>eudicotyledons</taxon>
        <taxon>Gunneridae</taxon>
        <taxon>Pentapetalae</taxon>
        <taxon>rosids</taxon>
        <taxon>fabids</taxon>
        <taxon>Fabales</taxon>
        <taxon>Fabaceae</taxon>
        <taxon>Papilionoideae</taxon>
        <taxon>50 kb inversion clade</taxon>
        <taxon>NPAAA clade</taxon>
        <taxon>Hologalegina</taxon>
        <taxon>IRL clade</taxon>
        <taxon>Fabeae</taxon>
        <taxon>Vicia</taxon>
    </lineage>
</organism>